<name>LEPA_COREF</name>
<comment type="function">
    <text evidence="1">Required for accurate and efficient protein synthesis under certain stress conditions. May act as a fidelity factor of the translation reaction, by catalyzing a one-codon backward translocation of tRNAs on improperly translocated ribosomes. Back-translocation proceeds from a post-translocation (POST) complex to a pre-translocation (PRE) complex, thus giving elongation factor G a second chance to translocate the tRNAs correctly. Binds to ribosomes in a GTP-dependent manner.</text>
</comment>
<comment type="catalytic activity">
    <reaction evidence="1">
        <text>GTP + H2O = GDP + phosphate + H(+)</text>
        <dbReference type="Rhea" id="RHEA:19669"/>
        <dbReference type="ChEBI" id="CHEBI:15377"/>
        <dbReference type="ChEBI" id="CHEBI:15378"/>
        <dbReference type="ChEBI" id="CHEBI:37565"/>
        <dbReference type="ChEBI" id="CHEBI:43474"/>
        <dbReference type="ChEBI" id="CHEBI:58189"/>
        <dbReference type="EC" id="3.6.5.n1"/>
    </reaction>
</comment>
<comment type="subcellular location">
    <subcellularLocation>
        <location evidence="1">Cell membrane</location>
        <topology evidence="1">Peripheral membrane protein</topology>
        <orientation evidence="1">Cytoplasmic side</orientation>
    </subcellularLocation>
</comment>
<comment type="similarity">
    <text evidence="1">Belongs to the TRAFAC class translation factor GTPase superfamily. Classic translation factor GTPase family. LepA subfamily.</text>
</comment>
<accession>Q8FNA3</accession>
<feature type="chain" id="PRO_0000176265" description="Elongation factor 4">
    <location>
        <begin position="1"/>
        <end position="615"/>
    </location>
</feature>
<feature type="domain" description="tr-type G">
    <location>
        <begin position="14"/>
        <end position="200"/>
    </location>
</feature>
<feature type="binding site" evidence="1">
    <location>
        <begin position="26"/>
        <end position="31"/>
    </location>
    <ligand>
        <name>GTP</name>
        <dbReference type="ChEBI" id="CHEBI:37565"/>
    </ligand>
</feature>
<feature type="binding site" evidence="1">
    <location>
        <begin position="147"/>
        <end position="150"/>
    </location>
    <ligand>
        <name>GTP</name>
        <dbReference type="ChEBI" id="CHEBI:37565"/>
    </ligand>
</feature>
<reference key="1">
    <citation type="journal article" date="2003" name="Genome Res.">
        <title>Comparative complete genome sequence analysis of the amino acid replacements responsible for the thermostability of Corynebacterium efficiens.</title>
        <authorList>
            <person name="Nishio Y."/>
            <person name="Nakamura Y."/>
            <person name="Kawarabayasi Y."/>
            <person name="Usuda Y."/>
            <person name="Kimura E."/>
            <person name="Sugimoto S."/>
            <person name="Matsui K."/>
            <person name="Yamagishi A."/>
            <person name="Kikuchi H."/>
            <person name="Ikeo K."/>
            <person name="Gojobori T."/>
        </authorList>
    </citation>
    <scope>NUCLEOTIDE SEQUENCE [LARGE SCALE GENOMIC DNA]</scope>
    <source>
        <strain>DSM 44549 / YS-314 / AJ 12310 / JCM 11189 / NBRC 100395</strain>
    </source>
</reference>
<dbReference type="EC" id="3.6.5.n1" evidence="1"/>
<dbReference type="EMBL" id="BA000035">
    <property type="protein sequence ID" value="BAC19052.1"/>
    <property type="molecule type" value="Genomic_DNA"/>
</dbReference>
<dbReference type="RefSeq" id="WP_006768248.1">
    <property type="nucleotide sequence ID" value="NC_004369.1"/>
</dbReference>
<dbReference type="SMR" id="Q8FNA3"/>
<dbReference type="STRING" id="196164.gene:10742673"/>
<dbReference type="KEGG" id="cef:CE2242"/>
<dbReference type="eggNOG" id="COG0481">
    <property type="taxonomic scope" value="Bacteria"/>
</dbReference>
<dbReference type="HOGENOM" id="CLU_009995_3_3_11"/>
<dbReference type="OrthoDB" id="9801472at2"/>
<dbReference type="Proteomes" id="UP000001409">
    <property type="component" value="Chromosome"/>
</dbReference>
<dbReference type="GO" id="GO:0005886">
    <property type="term" value="C:plasma membrane"/>
    <property type="evidence" value="ECO:0007669"/>
    <property type="project" value="UniProtKB-SubCell"/>
</dbReference>
<dbReference type="GO" id="GO:0005525">
    <property type="term" value="F:GTP binding"/>
    <property type="evidence" value="ECO:0007669"/>
    <property type="project" value="UniProtKB-UniRule"/>
</dbReference>
<dbReference type="GO" id="GO:0003924">
    <property type="term" value="F:GTPase activity"/>
    <property type="evidence" value="ECO:0007669"/>
    <property type="project" value="UniProtKB-UniRule"/>
</dbReference>
<dbReference type="GO" id="GO:0043022">
    <property type="term" value="F:ribosome binding"/>
    <property type="evidence" value="ECO:0007669"/>
    <property type="project" value="UniProtKB-UniRule"/>
</dbReference>
<dbReference type="GO" id="GO:0003746">
    <property type="term" value="F:translation elongation factor activity"/>
    <property type="evidence" value="ECO:0007669"/>
    <property type="project" value="UniProtKB-UniRule"/>
</dbReference>
<dbReference type="GO" id="GO:0045727">
    <property type="term" value="P:positive regulation of translation"/>
    <property type="evidence" value="ECO:0007669"/>
    <property type="project" value="UniProtKB-UniRule"/>
</dbReference>
<dbReference type="CDD" id="cd03699">
    <property type="entry name" value="EF4_II"/>
    <property type="match status" value="1"/>
</dbReference>
<dbReference type="CDD" id="cd16260">
    <property type="entry name" value="EF4_III"/>
    <property type="match status" value="1"/>
</dbReference>
<dbReference type="CDD" id="cd01890">
    <property type="entry name" value="LepA"/>
    <property type="match status" value="1"/>
</dbReference>
<dbReference type="CDD" id="cd03709">
    <property type="entry name" value="lepA_C"/>
    <property type="match status" value="1"/>
</dbReference>
<dbReference type="FunFam" id="3.40.50.300:FF:000078">
    <property type="entry name" value="Elongation factor 4"/>
    <property type="match status" value="1"/>
</dbReference>
<dbReference type="FunFam" id="2.40.30.10:FF:000015">
    <property type="entry name" value="Translation factor GUF1, mitochondrial"/>
    <property type="match status" value="1"/>
</dbReference>
<dbReference type="FunFam" id="3.30.70.240:FF:000007">
    <property type="entry name" value="Translation factor GUF1, mitochondrial"/>
    <property type="match status" value="1"/>
</dbReference>
<dbReference type="FunFam" id="3.30.70.2570:FF:000001">
    <property type="entry name" value="Translation factor GUF1, mitochondrial"/>
    <property type="match status" value="1"/>
</dbReference>
<dbReference type="FunFam" id="3.30.70.870:FF:000004">
    <property type="entry name" value="Translation factor GUF1, mitochondrial"/>
    <property type="match status" value="1"/>
</dbReference>
<dbReference type="Gene3D" id="3.30.70.240">
    <property type="match status" value="1"/>
</dbReference>
<dbReference type="Gene3D" id="3.30.70.2570">
    <property type="entry name" value="Elongation factor 4, C-terminal domain"/>
    <property type="match status" value="1"/>
</dbReference>
<dbReference type="Gene3D" id="3.30.70.870">
    <property type="entry name" value="Elongation Factor G (Translational Gtpase), domain 3"/>
    <property type="match status" value="1"/>
</dbReference>
<dbReference type="Gene3D" id="3.40.50.300">
    <property type="entry name" value="P-loop containing nucleotide triphosphate hydrolases"/>
    <property type="match status" value="1"/>
</dbReference>
<dbReference type="Gene3D" id="2.40.30.10">
    <property type="entry name" value="Translation factors"/>
    <property type="match status" value="1"/>
</dbReference>
<dbReference type="HAMAP" id="MF_00071">
    <property type="entry name" value="LepA"/>
    <property type="match status" value="1"/>
</dbReference>
<dbReference type="InterPro" id="IPR006297">
    <property type="entry name" value="EF-4"/>
</dbReference>
<dbReference type="InterPro" id="IPR035647">
    <property type="entry name" value="EFG_III/V"/>
</dbReference>
<dbReference type="InterPro" id="IPR000640">
    <property type="entry name" value="EFG_V-like"/>
</dbReference>
<dbReference type="InterPro" id="IPR004161">
    <property type="entry name" value="EFTu-like_2"/>
</dbReference>
<dbReference type="InterPro" id="IPR031157">
    <property type="entry name" value="G_TR_CS"/>
</dbReference>
<dbReference type="InterPro" id="IPR038363">
    <property type="entry name" value="LepA_C_sf"/>
</dbReference>
<dbReference type="InterPro" id="IPR013842">
    <property type="entry name" value="LepA_CTD"/>
</dbReference>
<dbReference type="InterPro" id="IPR035654">
    <property type="entry name" value="LepA_IV"/>
</dbReference>
<dbReference type="InterPro" id="IPR027417">
    <property type="entry name" value="P-loop_NTPase"/>
</dbReference>
<dbReference type="InterPro" id="IPR005225">
    <property type="entry name" value="Small_GTP-bd"/>
</dbReference>
<dbReference type="InterPro" id="IPR000795">
    <property type="entry name" value="T_Tr_GTP-bd_dom"/>
</dbReference>
<dbReference type="InterPro" id="IPR009000">
    <property type="entry name" value="Transl_B-barrel_sf"/>
</dbReference>
<dbReference type="NCBIfam" id="TIGR01393">
    <property type="entry name" value="lepA"/>
    <property type="match status" value="1"/>
</dbReference>
<dbReference type="NCBIfam" id="TIGR00231">
    <property type="entry name" value="small_GTP"/>
    <property type="match status" value="1"/>
</dbReference>
<dbReference type="PANTHER" id="PTHR43512:SF4">
    <property type="entry name" value="TRANSLATION FACTOR GUF1 HOMOLOG, CHLOROPLASTIC"/>
    <property type="match status" value="1"/>
</dbReference>
<dbReference type="PANTHER" id="PTHR43512">
    <property type="entry name" value="TRANSLATION FACTOR GUF1-RELATED"/>
    <property type="match status" value="1"/>
</dbReference>
<dbReference type="Pfam" id="PF00679">
    <property type="entry name" value="EFG_C"/>
    <property type="match status" value="1"/>
</dbReference>
<dbReference type="Pfam" id="PF00009">
    <property type="entry name" value="GTP_EFTU"/>
    <property type="match status" value="1"/>
</dbReference>
<dbReference type="Pfam" id="PF03144">
    <property type="entry name" value="GTP_EFTU_D2"/>
    <property type="match status" value="1"/>
</dbReference>
<dbReference type="Pfam" id="PF06421">
    <property type="entry name" value="LepA_C"/>
    <property type="match status" value="1"/>
</dbReference>
<dbReference type="PRINTS" id="PR00315">
    <property type="entry name" value="ELONGATNFCT"/>
</dbReference>
<dbReference type="SMART" id="SM00838">
    <property type="entry name" value="EFG_C"/>
    <property type="match status" value="1"/>
</dbReference>
<dbReference type="SUPFAM" id="SSF54980">
    <property type="entry name" value="EF-G C-terminal domain-like"/>
    <property type="match status" value="2"/>
</dbReference>
<dbReference type="SUPFAM" id="SSF52540">
    <property type="entry name" value="P-loop containing nucleoside triphosphate hydrolases"/>
    <property type="match status" value="1"/>
</dbReference>
<dbReference type="SUPFAM" id="SSF50447">
    <property type="entry name" value="Translation proteins"/>
    <property type="match status" value="1"/>
</dbReference>
<dbReference type="PROSITE" id="PS00301">
    <property type="entry name" value="G_TR_1"/>
    <property type="match status" value="1"/>
</dbReference>
<dbReference type="PROSITE" id="PS51722">
    <property type="entry name" value="G_TR_2"/>
    <property type="match status" value="1"/>
</dbReference>
<organism>
    <name type="scientific">Corynebacterium efficiens (strain DSM 44549 / YS-314 / AJ 12310 / JCM 11189 / NBRC 100395)</name>
    <dbReference type="NCBI Taxonomy" id="196164"/>
    <lineage>
        <taxon>Bacteria</taxon>
        <taxon>Bacillati</taxon>
        <taxon>Actinomycetota</taxon>
        <taxon>Actinomycetes</taxon>
        <taxon>Mycobacteriales</taxon>
        <taxon>Corynebacteriaceae</taxon>
        <taxon>Corynebacterium</taxon>
    </lineage>
</organism>
<evidence type="ECO:0000255" key="1">
    <source>
        <dbReference type="HAMAP-Rule" id="MF_00071"/>
    </source>
</evidence>
<gene>
    <name evidence="1" type="primary">lepA</name>
    <name type="ordered locus">CE2242</name>
</gene>
<sequence>MAEKFAEKTFTDPSRIRNFCIIAHIDHGKSTLADRILQLSNVVDARDMRAQYLDNMDIERERGITIKAQNVRLPWIPRSGEYEGQEIVMQMIDTPGHVDFTYEVSRALEACEGAILLVDAAQGIEAQTLANLYLAMENDLEIIPVLNKIDLPAADPDKYALEIANIVGCEPEDVLRVSGKTGVGVPELLDKVVELIPAPSPGPSEDAPARAMIFDSVYDTYRGVVTYIRVMEGRLTPRQKIKMMSTGATHELLEIGIVSPTPKKCEGLGPGEVGYLITGVKDVRQSKVGDTVTWAHNGAEEPLQGYQEPTPMVYSGLFPVSQADFPDLRDALEKLQLNDASLTYEPETSVALGFGFRCGFLGLLHMEITRDRLEREFDLDLISTAPSVNYRVVDEAGQEHRVHNPSDWPGGKLREIYEPIVKVTIIVPSEFVGPTMELCQAKRGQMGGMDYLSEDRVELRYIMPLGEIIFDFFDMLKSRTKGYASLNYEEAGEQEADLVKVDILLQGEPVDAFSAIVHRDNAQWYGNKMTVKLKSLIPRQQFEVPIQAAVGSRIIARENIRALRKDVLAKCYGGDISRKRKLLEKQKAGKKRMKNIGSVEVPQEAFVAALSTDEG</sequence>
<keyword id="KW-1003">Cell membrane</keyword>
<keyword id="KW-0342">GTP-binding</keyword>
<keyword id="KW-0378">Hydrolase</keyword>
<keyword id="KW-0472">Membrane</keyword>
<keyword id="KW-0547">Nucleotide-binding</keyword>
<keyword id="KW-0648">Protein biosynthesis</keyword>
<keyword id="KW-1185">Reference proteome</keyword>
<proteinExistence type="inferred from homology"/>
<protein>
    <recommendedName>
        <fullName evidence="1">Elongation factor 4</fullName>
        <shortName evidence="1">EF-4</shortName>
        <ecNumber evidence="1">3.6.5.n1</ecNumber>
    </recommendedName>
    <alternativeName>
        <fullName evidence="1">Ribosomal back-translocase LepA</fullName>
    </alternativeName>
</protein>